<sequence>MPELPEVEVVRRGLHAHVVGKTIGAVRVHHPRAVRRHEAGPADLTARLLGARITGTDRRGKYLWLLLDGCDTALVVHLGMSGQMLLGAVPRAEHVRISALLDDGTVLSFADQRTFGGWMLADLLEVDGSILPRPVAHLARDPLDPRFDAAAVVKVLRRKHSEIKRQLLDQQVVSGIGNIYADEALWRAKVHGARIAATMTGRQLTAVLDAAAEVMRDALAQGGTSFDSLYVNVNGESGYFDRSLDAYGREGESCRRCGAVMRREKFMNRSSFYCPKCQPRPRL</sequence>
<proteinExistence type="inferred from homology"/>
<gene>
    <name evidence="2" type="primary">mutM</name>
    <name evidence="2" type="synonym">fpg</name>
    <name type="ordered locus">MAP_2994c</name>
</gene>
<comment type="function">
    <text evidence="2">Involved in base excision repair of DNA damaged by oxidation or by mutagenic agents. Acts as a DNA glycosylase that recognizes and removes damaged bases. Has a preference for oxidized purines, such as 7,8-dihydro-8-oxoguanine (8-oxoG). Has AP (apurinic/apyrimidinic) lyase activity and introduces nicks in the DNA strand. Cleaves the DNA backbone by beta-delta elimination to generate a single-strand break at the site of the removed base with both 3'- and 5'-phosphates.</text>
</comment>
<comment type="catalytic activity">
    <reaction evidence="2">
        <text>Hydrolysis of DNA containing ring-opened 7-methylguanine residues, releasing 2,6-diamino-4-hydroxy-5-(N-methyl)formamidopyrimidine.</text>
        <dbReference type="EC" id="3.2.2.23"/>
    </reaction>
</comment>
<comment type="catalytic activity">
    <reaction evidence="2">
        <text>2'-deoxyribonucleotide-(2'-deoxyribose 5'-phosphate)-2'-deoxyribonucleotide-DNA = a 3'-end 2'-deoxyribonucleotide-(2,3-dehydro-2,3-deoxyribose 5'-phosphate)-DNA + a 5'-end 5'-phospho-2'-deoxyribonucleoside-DNA + H(+)</text>
        <dbReference type="Rhea" id="RHEA:66592"/>
        <dbReference type="Rhea" id="RHEA-COMP:13180"/>
        <dbReference type="Rhea" id="RHEA-COMP:16897"/>
        <dbReference type="Rhea" id="RHEA-COMP:17067"/>
        <dbReference type="ChEBI" id="CHEBI:15378"/>
        <dbReference type="ChEBI" id="CHEBI:136412"/>
        <dbReference type="ChEBI" id="CHEBI:157695"/>
        <dbReference type="ChEBI" id="CHEBI:167181"/>
        <dbReference type="EC" id="4.2.99.18"/>
    </reaction>
</comment>
<comment type="cofactor">
    <cofactor evidence="2">
        <name>Zn(2+)</name>
        <dbReference type="ChEBI" id="CHEBI:29105"/>
    </cofactor>
    <text evidence="2">Binds 1 zinc ion per subunit.</text>
</comment>
<comment type="subunit">
    <text evidence="2">Monomer.</text>
</comment>
<comment type="similarity">
    <text evidence="2">Belongs to the FPG family.</text>
</comment>
<name>FPG_MYCPA</name>
<evidence type="ECO:0000250" key="1"/>
<evidence type="ECO:0000255" key="2">
    <source>
        <dbReference type="HAMAP-Rule" id="MF_00103"/>
    </source>
</evidence>
<reference key="1">
    <citation type="journal article" date="2005" name="Proc. Natl. Acad. Sci. U.S.A.">
        <title>The complete genome sequence of Mycobacterium avium subspecies paratuberculosis.</title>
        <authorList>
            <person name="Li L."/>
            <person name="Bannantine J.P."/>
            <person name="Zhang Q."/>
            <person name="Amonsin A."/>
            <person name="May B.J."/>
            <person name="Alt D."/>
            <person name="Banerji N."/>
            <person name="Kanjilal S."/>
            <person name="Kapur V."/>
        </authorList>
    </citation>
    <scope>NUCLEOTIDE SEQUENCE [LARGE SCALE GENOMIC DNA]</scope>
    <source>
        <strain>ATCC BAA-968 / K-10</strain>
    </source>
</reference>
<organism>
    <name type="scientific">Mycolicibacterium paratuberculosis (strain ATCC BAA-968 / K-10)</name>
    <name type="common">Mycobacterium paratuberculosis</name>
    <dbReference type="NCBI Taxonomy" id="262316"/>
    <lineage>
        <taxon>Bacteria</taxon>
        <taxon>Bacillati</taxon>
        <taxon>Actinomycetota</taxon>
        <taxon>Actinomycetes</taxon>
        <taxon>Mycobacteriales</taxon>
        <taxon>Mycobacteriaceae</taxon>
        <taxon>Mycobacterium</taxon>
        <taxon>Mycobacterium avium complex (MAC)</taxon>
    </lineage>
</organism>
<feature type="initiator methionine" description="Removed" evidence="1">
    <location>
        <position position="1"/>
    </location>
</feature>
<feature type="chain" id="PRO_0000228448" description="Formamidopyrimidine-DNA glycosylase">
    <location>
        <begin position="2"/>
        <end position="283"/>
    </location>
</feature>
<feature type="zinc finger region" description="FPG-type" evidence="2">
    <location>
        <begin position="245"/>
        <end position="279"/>
    </location>
</feature>
<feature type="active site" description="Schiff-base intermediate with DNA" evidence="2">
    <location>
        <position position="2"/>
    </location>
</feature>
<feature type="active site" description="Proton donor" evidence="2">
    <location>
        <position position="3"/>
    </location>
</feature>
<feature type="active site" description="Proton donor; for beta-elimination activity" evidence="2">
    <location>
        <position position="61"/>
    </location>
</feature>
<feature type="active site" description="Proton donor; for delta-elimination activity" evidence="2">
    <location>
        <position position="269"/>
    </location>
</feature>
<feature type="binding site" evidence="2">
    <location>
        <position position="94"/>
    </location>
    <ligand>
        <name>DNA</name>
        <dbReference type="ChEBI" id="CHEBI:16991"/>
    </ligand>
</feature>
<feature type="binding site" evidence="2">
    <location>
        <position position="113"/>
    </location>
    <ligand>
        <name>DNA</name>
        <dbReference type="ChEBI" id="CHEBI:16991"/>
    </ligand>
</feature>
<feature type="binding site" evidence="2">
    <location>
        <position position="159"/>
    </location>
    <ligand>
        <name>DNA</name>
        <dbReference type="ChEBI" id="CHEBI:16991"/>
    </ligand>
</feature>
<dbReference type="EC" id="3.2.2.23" evidence="2"/>
<dbReference type="EC" id="4.2.99.18" evidence="2"/>
<dbReference type="EMBL" id="AE016958">
    <property type="protein sequence ID" value="AAS05311.1"/>
    <property type="molecule type" value="Genomic_DNA"/>
</dbReference>
<dbReference type="RefSeq" id="WP_003875050.1">
    <property type="nucleotide sequence ID" value="NZ_CP106873.1"/>
</dbReference>
<dbReference type="SMR" id="Q73VL9"/>
<dbReference type="STRING" id="262316.MAP_2994c"/>
<dbReference type="KEGG" id="mpa:MAP_2994c"/>
<dbReference type="PATRIC" id="fig|262316.17.peg.3171"/>
<dbReference type="eggNOG" id="COG0266">
    <property type="taxonomic scope" value="Bacteria"/>
</dbReference>
<dbReference type="HOGENOM" id="CLU_038423_1_2_11"/>
<dbReference type="Proteomes" id="UP000000580">
    <property type="component" value="Chromosome"/>
</dbReference>
<dbReference type="GO" id="GO:0034039">
    <property type="term" value="F:8-oxo-7,8-dihydroguanine DNA N-glycosylase activity"/>
    <property type="evidence" value="ECO:0007669"/>
    <property type="project" value="TreeGrafter"/>
</dbReference>
<dbReference type="GO" id="GO:0140078">
    <property type="term" value="F:class I DNA-(apurinic or apyrimidinic site) endonuclease activity"/>
    <property type="evidence" value="ECO:0007669"/>
    <property type="project" value="UniProtKB-EC"/>
</dbReference>
<dbReference type="GO" id="GO:0003684">
    <property type="term" value="F:damaged DNA binding"/>
    <property type="evidence" value="ECO:0007669"/>
    <property type="project" value="InterPro"/>
</dbReference>
<dbReference type="GO" id="GO:0008270">
    <property type="term" value="F:zinc ion binding"/>
    <property type="evidence" value="ECO:0007669"/>
    <property type="project" value="UniProtKB-UniRule"/>
</dbReference>
<dbReference type="GO" id="GO:0006284">
    <property type="term" value="P:base-excision repair"/>
    <property type="evidence" value="ECO:0007669"/>
    <property type="project" value="InterPro"/>
</dbReference>
<dbReference type="CDD" id="cd08966">
    <property type="entry name" value="EcFpg-like_N"/>
    <property type="match status" value="1"/>
</dbReference>
<dbReference type="FunFam" id="1.10.8.50:FF:000003">
    <property type="entry name" value="Formamidopyrimidine-DNA glycosylase"/>
    <property type="match status" value="1"/>
</dbReference>
<dbReference type="FunFam" id="3.20.190.10:FF:000006">
    <property type="entry name" value="Formamidopyrimidine-DNA glycosylase"/>
    <property type="match status" value="1"/>
</dbReference>
<dbReference type="Gene3D" id="1.10.8.50">
    <property type="match status" value="1"/>
</dbReference>
<dbReference type="Gene3D" id="3.20.190.10">
    <property type="entry name" value="MutM-like, N-terminal"/>
    <property type="match status" value="1"/>
</dbReference>
<dbReference type="HAMAP" id="MF_00103">
    <property type="entry name" value="Fapy_DNA_glycosyl"/>
    <property type="match status" value="1"/>
</dbReference>
<dbReference type="InterPro" id="IPR015886">
    <property type="entry name" value="DNA_glyclase/AP_lyase_DNA-bd"/>
</dbReference>
<dbReference type="InterPro" id="IPR015887">
    <property type="entry name" value="DNA_glyclase_Znf_dom_DNA_BS"/>
</dbReference>
<dbReference type="InterPro" id="IPR020629">
    <property type="entry name" value="Formamido-pyr_DNA_Glyclase"/>
</dbReference>
<dbReference type="InterPro" id="IPR012319">
    <property type="entry name" value="FPG_cat"/>
</dbReference>
<dbReference type="InterPro" id="IPR035937">
    <property type="entry name" value="MutM-like_N-ter"/>
</dbReference>
<dbReference type="InterPro" id="IPR010979">
    <property type="entry name" value="Ribosomal_uS13-like_H2TH"/>
</dbReference>
<dbReference type="InterPro" id="IPR000214">
    <property type="entry name" value="Znf_DNA_glyclase/AP_lyase"/>
</dbReference>
<dbReference type="InterPro" id="IPR010663">
    <property type="entry name" value="Znf_FPG/IleRS"/>
</dbReference>
<dbReference type="NCBIfam" id="TIGR00577">
    <property type="entry name" value="fpg"/>
    <property type="match status" value="1"/>
</dbReference>
<dbReference type="NCBIfam" id="NF002211">
    <property type="entry name" value="PRK01103.1"/>
    <property type="match status" value="1"/>
</dbReference>
<dbReference type="PANTHER" id="PTHR22993">
    <property type="entry name" value="FORMAMIDOPYRIMIDINE-DNA GLYCOSYLASE"/>
    <property type="match status" value="1"/>
</dbReference>
<dbReference type="PANTHER" id="PTHR22993:SF9">
    <property type="entry name" value="FORMAMIDOPYRIMIDINE-DNA GLYCOSYLASE"/>
    <property type="match status" value="1"/>
</dbReference>
<dbReference type="Pfam" id="PF01149">
    <property type="entry name" value="Fapy_DNA_glyco"/>
    <property type="match status" value="1"/>
</dbReference>
<dbReference type="Pfam" id="PF06831">
    <property type="entry name" value="H2TH"/>
    <property type="match status" value="1"/>
</dbReference>
<dbReference type="Pfam" id="PF06827">
    <property type="entry name" value="zf-FPG_IleRS"/>
    <property type="match status" value="1"/>
</dbReference>
<dbReference type="SMART" id="SM00898">
    <property type="entry name" value="Fapy_DNA_glyco"/>
    <property type="match status" value="1"/>
</dbReference>
<dbReference type="SMART" id="SM01232">
    <property type="entry name" value="H2TH"/>
    <property type="match status" value="1"/>
</dbReference>
<dbReference type="SUPFAM" id="SSF57716">
    <property type="entry name" value="Glucocorticoid receptor-like (DNA-binding domain)"/>
    <property type="match status" value="1"/>
</dbReference>
<dbReference type="SUPFAM" id="SSF81624">
    <property type="entry name" value="N-terminal domain of MutM-like DNA repair proteins"/>
    <property type="match status" value="1"/>
</dbReference>
<dbReference type="SUPFAM" id="SSF46946">
    <property type="entry name" value="S13-like H2TH domain"/>
    <property type="match status" value="1"/>
</dbReference>
<dbReference type="PROSITE" id="PS51068">
    <property type="entry name" value="FPG_CAT"/>
    <property type="match status" value="1"/>
</dbReference>
<dbReference type="PROSITE" id="PS01242">
    <property type="entry name" value="ZF_FPG_1"/>
    <property type="match status" value="1"/>
</dbReference>
<dbReference type="PROSITE" id="PS51066">
    <property type="entry name" value="ZF_FPG_2"/>
    <property type="match status" value="1"/>
</dbReference>
<keyword id="KW-0227">DNA damage</keyword>
<keyword id="KW-0234">DNA repair</keyword>
<keyword id="KW-0238">DNA-binding</keyword>
<keyword id="KW-0326">Glycosidase</keyword>
<keyword id="KW-0378">Hydrolase</keyword>
<keyword id="KW-0456">Lyase</keyword>
<keyword id="KW-0479">Metal-binding</keyword>
<keyword id="KW-0511">Multifunctional enzyme</keyword>
<keyword id="KW-1185">Reference proteome</keyword>
<keyword id="KW-0862">Zinc</keyword>
<keyword id="KW-0863">Zinc-finger</keyword>
<accession>Q73VL9</accession>
<protein>
    <recommendedName>
        <fullName evidence="2">Formamidopyrimidine-DNA glycosylase</fullName>
        <shortName evidence="2">Fapy-DNA glycosylase</shortName>
        <ecNumber evidence="2">3.2.2.23</ecNumber>
    </recommendedName>
    <alternativeName>
        <fullName evidence="2">DNA-(apurinic or apyrimidinic site) lyase MutM</fullName>
        <shortName evidence="2">AP lyase MutM</shortName>
        <ecNumber evidence="2">4.2.99.18</ecNumber>
    </alternativeName>
</protein>